<keyword id="KW-1185">Reference proteome</keyword>
<keyword id="KW-0687">Ribonucleoprotein</keyword>
<keyword id="KW-0689">Ribosomal protein</keyword>
<dbReference type="EMBL" id="CU928145">
    <property type="protein sequence ID" value="CAU97060.1"/>
    <property type="molecule type" value="Genomic_DNA"/>
</dbReference>
<dbReference type="RefSeq" id="WP_000290727.1">
    <property type="nucleotide sequence ID" value="NZ_CP028304.1"/>
</dbReference>
<dbReference type="SMR" id="B7LG22"/>
<dbReference type="GeneID" id="93776319"/>
<dbReference type="KEGG" id="eck:EC55989_1201"/>
<dbReference type="HOGENOM" id="CLU_129084_2_1_6"/>
<dbReference type="Proteomes" id="UP000000746">
    <property type="component" value="Chromosome"/>
</dbReference>
<dbReference type="GO" id="GO:0015934">
    <property type="term" value="C:large ribosomal subunit"/>
    <property type="evidence" value="ECO:0007669"/>
    <property type="project" value="InterPro"/>
</dbReference>
<dbReference type="GO" id="GO:0003735">
    <property type="term" value="F:structural constituent of ribosome"/>
    <property type="evidence" value="ECO:0007669"/>
    <property type="project" value="InterPro"/>
</dbReference>
<dbReference type="GO" id="GO:0006412">
    <property type="term" value="P:translation"/>
    <property type="evidence" value="ECO:0007669"/>
    <property type="project" value="UniProtKB-UniRule"/>
</dbReference>
<dbReference type="HAMAP" id="MF_00340">
    <property type="entry name" value="Ribosomal_bL32"/>
    <property type="match status" value="1"/>
</dbReference>
<dbReference type="InterPro" id="IPR002677">
    <property type="entry name" value="Ribosomal_bL32"/>
</dbReference>
<dbReference type="InterPro" id="IPR044957">
    <property type="entry name" value="Ribosomal_bL32_bact"/>
</dbReference>
<dbReference type="InterPro" id="IPR011332">
    <property type="entry name" value="Ribosomal_zn-bd"/>
</dbReference>
<dbReference type="NCBIfam" id="TIGR01031">
    <property type="entry name" value="rpmF_bact"/>
    <property type="match status" value="1"/>
</dbReference>
<dbReference type="PANTHER" id="PTHR35534">
    <property type="entry name" value="50S RIBOSOMAL PROTEIN L32"/>
    <property type="match status" value="1"/>
</dbReference>
<dbReference type="PANTHER" id="PTHR35534:SF1">
    <property type="entry name" value="LARGE RIBOSOMAL SUBUNIT PROTEIN BL32"/>
    <property type="match status" value="1"/>
</dbReference>
<dbReference type="Pfam" id="PF01783">
    <property type="entry name" value="Ribosomal_L32p"/>
    <property type="match status" value="1"/>
</dbReference>
<dbReference type="SUPFAM" id="SSF57829">
    <property type="entry name" value="Zn-binding ribosomal proteins"/>
    <property type="match status" value="1"/>
</dbReference>
<proteinExistence type="inferred from homology"/>
<evidence type="ECO:0000255" key="1">
    <source>
        <dbReference type="HAMAP-Rule" id="MF_00340"/>
    </source>
</evidence>
<evidence type="ECO:0000256" key="2">
    <source>
        <dbReference type="SAM" id="MobiDB-lite"/>
    </source>
</evidence>
<evidence type="ECO:0000305" key="3"/>
<reference key="1">
    <citation type="journal article" date="2009" name="PLoS Genet.">
        <title>Organised genome dynamics in the Escherichia coli species results in highly diverse adaptive paths.</title>
        <authorList>
            <person name="Touchon M."/>
            <person name="Hoede C."/>
            <person name="Tenaillon O."/>
            <person name="Barbe V."/>
            <person name="Baeriswyl S."/>
            <person name="Bidet P."/>
            <person name="Bingen E."/>
            <person name="Bonacorsi S."/>
            <person name="Bouchier C."/>
            <person name="Bouvet O."/>
            <person name="Calteau A."/>
            <person name="Chiapello H."/>
            <person name="Clermont O."/>
            <person name="Cruveiller S."/>
            <person name="Danchin A."/>
            <person name="Diard M."/>
            <person name="Dossat C."/>
            <person name="Karoui M.E."/>
            <person name="Frapy E."/>
            <person name="Garry L."/>
            <person name="Ghigo J.M."/>
            <person name="Gilles A.M."/>
            <person name="Johnson J."/>
            <person name="Le Bouguenec C."/>
            <person name="Lescat M."/>
            <person name="Mangenot S."/>
            <person name="Martinez-Jehanne V."/>
            <person name="Matic I."/>
            <person name="Nassif X."/>
            <person name="Oztas S."/>
            <person name="Petit M.A."/>
            <person name="Pichon C."/>
            <person name="Rouy Z."/>
            <person name="Ruf C.S."/>
            <person name="Schneider D."/>
            <person name="Tourret J."/>
            <person name="Vacherie B."/>
            <person name="Vallenet D."/>
            <person name="Medigue C."/>
            <person name="Rocha E.P.C."/>
            <person name="Denamur E."/>
        </authorList>
    </citation>
    <scope>NUCLEOTIDE SEQUENCE [LARGE SCALE GENOMIC DNA]</scope>
    <source>
        <strain>55989 / EAEC</strain>
    </source>
</reference>
<comment type="similarity">
    <text evidence="1">Belongs to the bacterial ribosomal protein bL32 family.</text>
</comment>
<name>RL32_ECO55</name>
<feature type="chain" id="PRO_1000195974" description="Large ribosomal subunit protein bL32">
    <location>
        <begin position="1"/>
        <end position="57"/>
    </location>
</feature>
<feature type="region of interest" description="Disordered" evidence="2">
    <location>
        <begin position="1"/>
        <end position="38"/>
    </location>
</feature>
<accession>B7LG22</accession>
<organism>
    <name type="scientific">Escherichia coli (strain 55989 / EAEC)</name>
    <dbReference type="NCBI Taxonomy" id="585055"/>
    <lineage>
        <taxon>Bacteria</taxon>
        <taxon>Pseudomonadati</taxon>
        <taxon>Pseudomonadota</taxon>
        <taxon>Gammaproteobacteria</taxon>
        <taxon>Enterobacterales</taxon>
        <taxon>Enterobacteriaceae</taxon>
        <taxon>Escherichia</taxon>
    </lineage>
</organism>
<sequence length="57" mass="6446">MAVQQNKPTRSKRGMRRSHDALTAVTSLSVDKTSGEKHLRHHITADGYYRGRKVIAK</sequence>
<protein>
    <recommendedName>
        <fullName evidence="1">Large ribosomal subunit protein bL32</fullName>
    </recommendedName>
    <alternativeName>
        <fullName evidence="3">50S ribosomal protein L32</fullName>
    </alternativeName>
</protein>
<gene>
    <name evidence="1" type="primary">rpmF</name>
    <name type="ordered locus">EC55989_1201</name>
</gene>